<proteinExistence type="evidence at protein level"/>
<accession>Q01663</accession>
<accession>Q9US23</accession>
<accession>Q9UU69</accession>
<protein>
    <recommendedName>
        <fullName>AP-1-like transcription factor</fullName>
    </recommendedName>
    <alternativeName>
        <fullName>Caffeine resistance protein 3</fullName>
    </alternativeName>
</protein>
<feature type="chain" id="PRO_0000076532" description="AP-1-like transcription factor">
    <location>
        <begin position="1"/>
        <end position="552"/>
    </location>
</feature>
<feature type="domain" description="bZIP" evidence="3">
    <location>
        <begin position="76"/>
        <end position="139"/>
    </location>
</feature>
<feature type="region of interest" description="Disordered" evidence="4">
    <location>
        <begin position="1"/>
        <end position="99"/>
    </location>
</feature>
<feature type="region of interest" description="Basic motif" evidence="3">
    <location>
        <begin position="81"/>
        <end position="102"/>
    </location>
</feature>
<feature type="region of interest" description="Leucine-zipper" evidence="3">
    <location>
        <begin position="104"/>
        <end position="111"/>
    </location>
</feature>
<feature type="region of interest" description="Disordered" evidence="4">
    <location>
        <begin position="213"/>
        <end position="244"/>
    </location>
</feature>
<feature type="region of interest" description="n-CRD" evidence="18">
    <location>
        <begin position="259"/>
        <end position="290"/>
    </location>
</feature>
<feature type="region of interest" description="Disordered" evidence="4">
    <location>
        <begin position="460"/>
        <end position="489"/>
    </location>
</feature>
<feature type="region of interest" description="c-CRD" evidence="18">
    <location>
        <begin position="501"/>
        <end position="532"/>
    </location>
</feature>
<feature type="short sequence motif" description="Nuclear localization signal" evidence="2">
    <location>
        <begin position="81"/>
        <end position="88"/>
    </location>
</feature>
<feature type="short sequence motif" description="Nuclear export signal" evidence="17">
    <location>
        <begin position="515"/>
        <end position="533"/>
    </location>
</feature>
<feature type="compositionally biased region" description="Polar residues" evidence="4">
    <location>
        <begin position="1"/>
        <end position="14"/>
    </location>
</feature>
<feature type="compositionally biased region" description="Basic and acidic residues" evidence="4">
    <location>
        <begin position="36"/>
        <end position="47"/>
    </location>
</feature>
<feature type="compositionally biased region" description="Acidic residues" evidence="4">
    <location>
        <begin position="48"/>
        <end position="61"/>
    </location>
</feature>
<feature type="compositionally biased region" description="Basic and acidic residues" evidence="4">
    <location>
        <begin position="62"/>
        <end position="80"/>
    </location>
</feature>
<feature type="compositionally biased region" description="Polar residues" evidence="4">
    <location>
        <begin position="219"/>
        <end position="228"/>
    </location>
</feature>
<feature type="compositionally biased region" description="Low complexity" evidence="4">
    <location>
        <begin position="229"/>
        <end position="240"/>
    </location>
</feature>
<feature type="disulfide bond" description="In nuclear retained form" evidence="7 9">
    <location>
        <begin position="278"/>
        <end position="501"/>
    </location>
</feature>
<feature type="disulfide bond" description="In nuclear retained form" evidence="1">
    <location>
        <begin position="285"/>
        <end position="532"/>
    </location>
</feature>
<feature type="mutagenesis site" description="No effect." evidence="13">
    <original>C</original>
    <variation>S</variation>
    <location>
        <position position="259"/>
    </location>
</feature>
<feature type="mutagenesis site" description="Constitutively cytoplasmic." evidence="9 13">
    <original>C</original>
    <variation>A</variation>
    <location>
        <position position="278"/>
    </location>
</feature>
<feature type="mutagenesis site" description="Constitutively cytoplasmic." evidence="13">
    <original>C</original>
    <variation>S</variation>
    <location>
        <position position="285"/>
    </location>
</feature>
<feature type="mutagenesis site" description="Constitutively cytoplasmic." evidence="9 13">
    <original>C</original>
    <variation>A</variation>
    <location>
        <position position="501"/>
    </location>
</feature>
<feature type="mutagenesis site" description="Impairs nuclear export; when associated with A-519." evidence="5">
    <original>F</original>
    <variation>A</variation>
    <location>
        <position position="517"/>
    </location>
</feature>
<feature type="mutagenesis site" description="Weakens nuclear export. Impairs nuclear export; when associated with A-517." evidence="5">
    <original>I</original>
    <variation>A</variation>
    <location>
        <position position="519"/>
    </location>
</feature>
<feature type="mutagenesis site" description="Impairs nuclear export." evidence="5">
    <original>L</original>
    <variation>A</variation>
    <location>
        <position position="522"/>
    </location>
</feature>
<feature type="mutagenesis site" description="No effect." evidence="13">
    <original>C</original>
    <variation>A</variation>
    <location>
        <position position="523"/>
    </location>
</feature>
<feature type="mutagenesis site" description="Impairs nuclear export; when associated with S-532." evidence="5">
    <original>C</original>
    <variation>S</variation>
    <location>
        <position position="523"/>
    </location>
</feature>
<feature type="mutagenesis site" description="Impairs nuclear export." evidence="5">
    <original>L</original>
    <variation>A</variation>
    <location>
        <position position="526"/>
    </location>
</feature>
<feature type="mutagenesis site" description="Weakens nuclear export. Impairs nuclear export; when associated with S-523." evidence="5">
    <original>C</original>
    <variation>S</variation>
    <location>
        <position position="532"/>
    </location>
</feature>
<feature type="mutagenesis site" description="Constitutively cytoplasmic." evidence="13">
    <original>C</original>
    <variation>T</variation>
    <location>
        <position position="532"/>
    </location>
</feature>
<feature type="sequence conflict" description="In Ref. 1; CAA40363." evidence="16" ref="1">
    <original>S</original>
    <variation>P</variation>
    <location>
        <position position="166"/>
    </location>
</feature>
<feature type="sequence conflict" description="In Ref. 1; CAA40363." evidence="16" ref="1">
    <original>KL</original>
    <variation>NV</variation>
    <location>
        <begin position="280"/>
        <end position="281"/>
    </location>
</feature>
<feature type="sequence conflict" description="In Ref. 1; CAA40363." evidence="16" ref="1">
    <original>DVEAALNQFN</original>
    <variation>RC</variation>
    <location>
        <begin position="543"/>
        <end position="552"/>
    </location>
</feature>
<feature type="helix" evidence="19">
    <location>
        <begin position="80"/>
        <end position="125"/>
    </location>
</feature>
<feature type="helix" evidence="19">
    <location>
        <begin position="128"/>
        <end position="138"/>
    </location>
</feature>
<keyword id="KW-0002">3D-structure</keyword>
<keyword id="KW-0010">Activator</keyword>
<keyword id="KW-0963">Cytoplasm</keyword>
<keyword id="KW-0903">Direct protein sequencing</keyword>
<keyword id="KW-1015">Disulfide bond</keyword>
<keyword id="KW-0238">DNA-binding</keyword>
<keyword id="KW-0539">Nucleus</keyword>
<keyword id="KW-1185">Reference proteome</keyword>
<keyword id="KW-0804">Transcription</keyword>
<keyword id="KW-0805">Transcription regulation</keyword>
<sequence>MSGQTETLSSTSNIPIAKAEPEQSADFSASHKKRGPVSDRSSRRTSSEEVDLMPNVDDEVDGDVKPKKIGRKNSDQEPSSKRKAQNRAAQRAFRKRKEDHLKALETQVVTLKELHSSTTLENDQLRQKVRQLEEELRILKDGSFTFEMSLPHRNPSLSSLPTTGFSSNFAHMKDGISPQSNLHLSPNSIEKPNMHQNVLHNDRSADNLNHRYQVPPTLVDSNSAQGTLSPETPSSSDSPSNLYLNYPKRKSITHLHHDCSALSNGENGEDVADGKQFCQKLSTACGSIACSMLTKTTPHRASVDILSNLHESTVSPPMADESVQRSSEVSKSIPNVELSLNVNQQFVSPFGGTDSFPLPTDTGLDSLFEPDSAIENSHLKNVVMEPELFQAWREPAESLDKEFFNDEGEIDDVFHNYFHNSNENGDLITNSLHGLDFLENANESFPEQMYPFIKHNKDYISNHPDEVPPDGLPQKGKHDTSSQMPSENEIVPAKERAYLSCPKVWSKIINHPRFESFDIDDLCSKLKNKAKCSSSGVLLDERDVEAALNQFN</sequence>
<name>AP1_SCHPO</name>
<gene>
    <name type="primary">pap1</name>
    <name type="synonym">caf3</name>
    <name type="ORF">SPAC1783.07c</name>
</gene>
<organism>
    <name type="scientific">Schizosaccharomyces pombe (strain 972 / ATCC 24843)</name>
    <name type="common">Fission yeast</name>
    <dbReference type="NCBI Taxonomy" id="284812"/>
    <lineage>
        <taxon>Eukaryota</taxon>
        <taxon>Fungi</taxon>
        <taxon>Dikarya</taxon>
        <taxon>Ascomycota</taxon>
        <taxon>Taphrinomycotina</taxon>
        <taxon>Schizosaccharomycetes</taxon>
        <taxon>Schizosaccharomycetales</taxon>
        <taxon>Schizosaccharomycetaceae</taxon>
        <taxon>Schizosaccharomyces</taxon>
    </lineage>
</organism>
<dbReference type="EMBL" id="X57078">
    <property type="protein sequence ID" value="CAA40363.1"/>
    <property type="molecule type" value="Genomic_DNA"/>
</dbReference>
<dbReference type="EMBL" id="CU329670">
    <property type="protein sequence ID" value="CAB66170.1"/>
    <property type="molecule type" value="Genomic_DNA"/>
</dbReference>
<dbReference type="EMBL" id="AB027778">
    <property type="protein sequence ID" value="BAA87082.1"/>
    <property type="molecule type" value="Genomic_DNA"/>
</dbReference>
<dbReference type="PIR" id="S15664">
    <property type="entry name" value="S15664"/>
</dbReference>
<dbReference type="PIR" id="T50109">
    <property type="entry name" value="T50109"/>
</dbReference>
<dbReference type="RefSeq" id="NP_593662.1">
    <property type="nucleotide sequence ID" value="NM_001019094.2"/>
</dbReference>
<dbReference type="PDB" id="1GD2">
    <property type="method" value="X-ray"/>
    <property type="resolution" value="2.00 A"/>
    <property type="chains" value="E/F/G/H/I/J=71-140"/>
</dbReference>
<dbReference type="PDBsum" id="1GD2"/>
<dbReference type="SMR" id="Q01663"/>
<dbReference type="BioGRID" id="278616">
    <property type="interactions" value="76"/>
</dbReference>
<dbReference type="FunCoup" id="Q01663">
    <property type="interactions" value="48"/>
</dbReference>
<dbReference type="IntAct" id="Q01663">
    <property type="interactions" value="1"/>
</dbReference>
<dbReference type="MINT" id="Q01663"/>
<dbReference type="STRING" id="284812.Q01663"/>
<dbReference type="iPTMnet" id="Q01663"/>
<dbReference type="PaxDb" id="4896-SPAC1783.07c.1"/>
<dbReference type="EnsemblFungi" id="SPAC1783.07c.1">
    <property type="protein sequence ID" value="SPAC1783.07c.1:pep"/>
    <property type="gene ID" value="SPAC1783.07c"/>
</dbReference>
<dbReference type="GeneID" id="2542140"/>
<dbReference type="KEGG" id="spo:2542140"/>
<dbReference type="PomBase" id="SPAC1783.07c">
    <property type="gene designation" value="pap1"/>
</dbReference>
<dbReference type="VEuPathDB" id="FungiDB:SPAC1783.07c"/>
<dbReference type="eggNOG" id="ENOG502RPD7">
    <property type="taxonomic scope" value="Eukaryota"/>
</dbReference>
<dbReference type="HOGENOM" id="CLU_492711_0_0_1"/>
<dbReference type="InParanoid" id="Q01663"/>
<dbReference type="OMA" id="LNMACGN"/>
<dbReference type="PhylomeDB" id="Q01663"/>
<dbReference type="PRO" id="PR:Q01663"/>
<dbReference type="Proteomes" id="UP000002485">
    <property type="component" value="Chromosome I"/>
</dbReference>
<dbReference type="GO" id="GO:0000785">
    <property type="term" value="C:chromatin"/>
    <property type="evidence" value="ECO:0000314"/>
    <property type="project" value="PomBase"/>
</dbReference>
<dbReference type="GO" id="GO:0005737">
    <property type="term" value="C:cytoplasm"/>
    <property type="evidence" value="ECO:0000314"/>
    <property type="project" value="PomBase"/>
</dbReference>
<dbReference type="GO" id="GO:0005829">
    <property type="term" value="C:cytosol"/>
    <property type="evidence" value="ECO:0007005"/>
    <property type="project" value="PomBase"/>
</dbReference>
<dbReference type="GO" id="GO:0005634">
    <property type="term" value="C:nucleus"/>
    <property type="evidence" value="ECO:0000314"/>
    <property type="project" value="PomBase"/>
</dbReference>
<dbReference type="GO" id="GO:0090575">
    <property type="term" value="C:RNA polymerase II transcription regulator complex"/>
    <property type="evidence" value="ECO:0000353"/>
    <property type="project" value="PomBase"/>
</dbReference>
<dbReference type="GO" id="GO:0008301">
    <property type="term" value="F:DNA binding, bending"/>
    <property type="evidence" value="ECO:0000314"/>
    <property type="project" value="PomBase"/>
</dbReference>
<dbReference type="GO" id="GO:0001228">
    <property type="term" value="F:DNA-binding transcription activator activity, RNA polymerase II-specific"/>
    <property type="evidence" value="ECO:0000314"/>
    <property type="project" value="PomBase"/>
</dbReference>
<dbReference type="GO" id="GO:0000978">
    <property type="term" value="F:RNA polymerase II cis-regulatory region sequence-specific DNA binding"/>
    <property type="evidence" value="ECO:0000314"/>
    <property type="project" value="PomBase"/>
</dbReference>
<dbReference type="GO" id="GO:0000976">
    <property type="term" value="F:transcription cis-regulatory region binding"/>
    <property type="evidence" value="ECO:0000318"/>
    <property type="project" value="GO_Central"/>
</dbReference>
<dbReference type="GO" id="GO:0034599">
    <property type="term" value="P:cellular response to oxidative stress"/>
    <property type="evidence" value="ECO:0000315"/>
    <property type="project" value="PomBase"/>
</dbReference>
<dbReference type="GO" id="GO:0045944">
    <property type="term" value="P:positive regulation of transcription by RNA polymerase II"/>
    <property type="evidence" value="ECO:0000315"/>
    <property type="project" value="PomBase"/>
</dbReference>
<dbReference type="CDD" id="cd14688">
    <property type="entry name" value="bZIP_YAP"/>
    <property type="match status" value="1"/>
</dbReference>
<dbReference type="FunFam" id="1.10.238.100:FF:000002">
    <property type="entry name" value="AP-1-like transcription factor"/>
    <property type="match status" value="1"/>
</dbReference>
<dbReference type="FunFam" id="1.20.5.170:FF:000067">
    <property type="entry name" value="BZIP transcription factor"/>
    <property type="match status" value="1"/>
</dbReference>
<dbReference type="Gene3D" id="1.20.5.170">
    <property type="match status" value="1"/>
</dbReference>
<dbReference type="Gene3D" id="1.10.238.100">
    <property type="entry name" value="YAP1 redox domain. Chain B"/>
    <property type="match status" value="1"/>
</dbReference>
<dbReference type="InterPro" id="IPR050936">
    <property type="entry name" value="AP-1-like"/>
</dbReference>
<dbReference type="InterPro" id="IPR004827">
    <property type="entry name" value="bZIP"/>
</dbReference>
<dbReference type="InterPro" id="IPR046347">
    <property type="entry name" value="bZIP_sf"/>
</dbReference>
<dbReference type="InterPro" id="IPR013910">
    <property type="entry name" value="TF_PAP1"/>
</dbReference>
<dbReference type="InterPro" id="IPR023167">
    <property type="entry name" value="Yap1_redox_dom_sf"/>
</dbReference>
<dbReference type="PANTHER" id="PTHR40621:SF6">
    <property type="entry name" value="AP-1-LIKE TRANSCRIPTION FACTOR YAP1-RELATED"/>
    <property type="match status" value="1"/>
</dbReference>
<dbReference type="PANTHER" id="PTHR40621">
    <property type="entry name" value="TRANSCRIPTION FACTOR KAPC-RELATED"/>
    <property type="match status" value="1"/>
</dbReference>
<dbReference type="Pfam" id="PF00170">
    <property type="entry name" value="bZIP_1"/>
    <property type="match status" value="1"/>
</dbReference>
<dbReference type="Pfam" id="PF08601">
    <property type="entry name" value="PAP1"/>
    <property type="match status" value="1"/>
</dbReference>
<dbReference type="SMART" id="SM00338">
    <property type="entry name" value="BRLZ"/>
    <property type="match status" value="1"/>
</dbReference>
<dbReference type="SUPFAM" id="SSF57959">
    <property type="entry name" value="Leucine zipper domain"/>
    <property type="match status" value="1"/>
</dbReference>
<dbReference type="SUPFAM" id="SSF111430">
    <property type="entry name" value="YAP1 redox domain"/>
    <property type="match status" value="1"/>
</dbReference>
<dbReference type="PROSITE" id="PS50217">
    <property type="entry name" value="BZIP"/>
    <property type="match status" value="1"/>
</dbReference>
<dbReference type="PROSITE" id="PS00036">
    <property type="entry name" value="BZIP_BASIC"/>
    <property type="match status" value="1"/>
</dbReference>
<evidence type="ECO:0000250" key="1">
    <source>
        <dbReference type="UniProtKB" id="P19880"/>
    </source>
</evidence>
<evidence type="ECO:0000255" key="2">
    <source>
        <dbReference type="PROSITE-ProRule" id="PRU00768"/>
    </source>
</evidence>
<evidence type="ECO:0000255" key="3">
    <source>
        <dbReference type="PROSITE-ProRule" id="PRU00978"/>
    </source>
</evidence>
<evidence type="ECO:0000256" key="4">
    <source>
        <dbReference type="SAM" id="MobiDB-lite"/>
    </source>
</evidence>
<evidence type="ECO:0000269" key="5">
    <source>
    </source>
</evidence>
<evidence type="ECO:0000269" key="6">
    <source>
    </source>
</evidence>
<evidence type="ECO:0000269" key="7">
    <source>
    </source>
</evidence>
<evidence type="ECO:0000269" key="8">
    <source>
    </source>
</evidence>
<evidence type="ECO:0000269" key="9">
    <source>
    </source>
</evidence>
<evidence type="ECO:0000269" key="10">
    <source>
    </source>
</evidence>
<evidence type="ECO:0000269" key="11">
    <source>
    </source>
</evidence>
<evidence type="ECO:0000269" key="12">
    <source>
    </source>
</evidence>
<evidence type="ECO:0000269" key="13">
    <source>
    </source>
</evidence>
<evidence type="ECO:0000269" key="14">
    <source>
    </source>
</evidence>
<evidence type="ECO:0000269" key="15">
    <source>
    </source>
</evidence>
<evidence type="ECO:0000305" key="16"/>
<evidence type="ECO:0000305" key="17">
    <source>
    </source>
</evidence>
<evidence type="ECO:0000305" key="18">
    <source>
    </source>
</evidence>
<evidence type="ECO:0007829" key="19">
    <source>
        <dbReference type="PDB" id="1GD2"/>
    </source>
</evidence>
<comment type="function">
    <text evidence="6 8 12 13 15">Transcription activator involved in multidrug resistance, oxidative stress response, and redox homeostasis. Regulates the transcription of genes encoding antioxidant enzymes like catalase ctt1 and components of the cellular thiol-reducing pathways, including the thioredoxin system (trx2, trr1), ABC transporters involved in multidrug resistance like bfr1/hba2 and pmd1 as well as the gene obr1/apt1. Preferentially binds to promoters with the core binding site 5'-TTA[CG]TAA-3'. Activity of the transcription factor is controlled through oxidation of specific cysteine residues resulting in the alteration of its subcellular location. Oxidative stress induces nuclear accumulation and as a result pap1 transcriptional activity. Required for sty1/spc1-conferred staurosporine resistance.</text>
</comment>
<comment type="subunit">
    <text evidence="6 7 14">Homodimer (PubMed:11017199). The reduced form of pap1 interacts in the nucleus with the nuclear export protein crm1, and in the cytoplasm with the peroxiredoxin tpx1 (PubMed:12100563, PubMed:24316080).</text>
</comment>
<comment type="subcellular location">
    <subcellularLocation>
        <location evidence="5 7 9 10 15">Nucleus</location>
    </subcellularLocation>
    <subcellularLocation>
        <location evidence="5 7 9 10 11 15">Cytoplasm</location>
    </subcellularLocation>
    <text evidence="5 15">Oxidized pap1 is found predominantly in the nucleus, while reduced pap1 is continuously exported to the cytoplasm by crm1/exportin 1.</text>
</comment>
<comment type="domain">
    <text evidence="7 13">Contains two cysteine rich domains (CRD), referred to as the N- and C-terminal CRD's, n-CRD (Cys-259, Cys-278, Cys-285 and Cys-290) and c-CRD (Cys-501, Cys-523 and Cys-532), respectively. Cys-259 and Cys-290 are not conserved in orthologs in other yeast species. A nuclear export signal is embedded in the c-CRD, with which the nuclear export protein crm1/exportin 1 interacts only in the absence of disulfide bonds (or otherwise oxidized cysteines) within the c-CRD or between the c-CRD and the n-CRD.</text>
</comment>
<comment type="PTM">
    <text evidence="7 9 10">Depending on the oxidative stress inducing agent, pap1 can undergo two distinct conformational changes, both masking the nuclear export signal, thus abolishing nuclear export by crm1/exportin 1. The glutathione-depleting agent diethylmaleate (DEM) leads to the non-reversible modification of at least 2 cysteine residues in the c-CRD. Peroxide stress induces the formation of a tpx1-dependent interdomain disulfide bond between Cys-278 and Cys-501.</text>
</comment>
<comment type="similarity">
    <text evidence="16">Belongs to the bZIP family. YAP subfamily.</text>
</comment>
<reference key="1">
    <citation type="journal article" date="1991" name="Genes Dev.">
        <title>Fission yeast genes that confer resistance to staurosporine encode an AP-1-like transcription factor and a protein kinase related to the mammalian ERK1/MAP2 and budding yeast FUS3 and KSS1 kinases.</title>
        <authorList>
            <person name="Toda T."/>
            <person name="Shimanuki M."/>
            <person name="Yanagida M."/>
        </authorList>
    </citation>
    <scope>NUCLEOTIDE SEQUENCE [GENOMIC DNA]</scope>
    <scope>FUNCTION</scope>
</reference>
<reference key="2">
    <citation type="journal article" date="2002" name="Nature">
        <title>The genome sequence of Schizosaccharomyces pombe.</title>
        <authorList>
            <person name="Wood V."/>
            <person name="Gwilliam R."/>
            <person name="Rajandream M.A."/>
            <person name="Lyne M.H."/>
            <person name="Lyne R."/>
            <person name="Stewart A."/>
            <person name="Sgouros J.G."/>
            <person name="Peat N."/>
            <person name="Hayles J."/>
            <person name="Baker S.G."/>
            <person name="Basham D."/>
            <person name="Bowman S."/>
            <person name="Brooks K."/>
            <person name="Brown D."/>
            <person name="Brown S."/>
            <person name="Chillingworth T."/>
            <person name="Churcher C.M."/>
            <person name="Collins M."/>
            <person name="Connor R."/>
            <person name="Cronin A."/>
            <person name="Davis P."/>
            <person name="Feltwell T."/>
            <person name="Fraser A."/>
            <person name="Gentles S."/>
            <person name="Goble A."/>
            <person name="Hamlin N."/>
            <person name="Harris D.E."/>
            <person name="Hidalgo J."/>
            <person name="Hodgson G."/>
            <person name="Holroyd S."/>
            <person name="Hornsby T."/>
            <person name="Howarth S."/>
            <person name="Huckle E.J."/>
            <person name="Hunt S."/>
            <person name="Jagels K."/>
            <person name="James K.D."/>
            <person name="Jones L."/>
            <person name="Jones M."/>
            <person name="Leather S."/>
            <person name="McDonald S."/>
            <person name="McLean J."/>
            <person name="Mooney P."/>
            <person name="Moule S."/>
            <person name="Mungall K.L."/>
            <person name="Murphy L.D."/>
            <person name="Niblett D."/>
            <person name="Odell C."/>
            <person name="Oliver K."/>
            <person name="O'Neil S."/>
            <person name="Pearson D."/>
            <person name="Quail M.A."/>
            <person name="Rabbinowitsch E."/>
            <person name="Rutherford K.M."/>
            <person name="Rutter S."/>
            <person name="Saunders D."/>
            <person name="Seeger K."/>
            <person name="Sharp S."/>
            <person name="Skelton J."/>
            <person name="Simmonds M.N."/>
            <person name="Squares R."/>
            <person name="Squares S."/>
            <person name="Stevens K."/>
            <person name="Taylor K."/>
            <person name="Taylor R.G."/>
            <person name="Tivey A."/>
            <person name="Walsh S.V."/>
            <person name="Warren T."/>
            <person name="Whitehead S."/>
            <person name="Woodward J.R."/>
            <person name="Volckaert G."/>
            <person name="Aert R."/>
            <person name="Robben J."/>
            <person name="Grymonprez B."/>
            <person name="Weltjens I."/>
            <person name="Vanstreels E."/>
            <person name="Rieger M."/>
            <person name="Schaefer M."/>
            <person name="Mueller-Auer S."/>
            <person name="Gabel C."/>
            <person name="Fuchs M."/>
            <person name="Duesterhoeft A."/>
            <person name="Fritzc C."/>
            <person name="Holzer E."/>
            <person name="Moestl D."/>
            <person name="Hilbert H."/>
            <person name="Borzym K."/>
            <person name="Langer I."/>
            <person name="Beck A."/>
            <person name="Lehrach H."/>
            <person name="Reinhardt R."/>
            <person name="Pohl T.M."/>
            <person name="Eger P."/>
            <person name="Zimmermann W."/>
            <person name="Wedler H."/>
            <person name="Wambutt R."/>
            <person name="Purnelle B."/>
            <person name="Goffeau A."/>
            <person name="Cadieu E."/>
            <person name="Dreano S."/>
            <person name="Gloux S."/>
            <person name="Lelaure V."/>
            <person name="Mottier S."/>
            <person name="Galibert F."/>
            <person name="Aves S.J."/>
            <person name="Xiang Z."/>
            <person name="Hunt C."/>
            <person name="Moore K."/>
            <person name="Hurst S.M."/>
            <person name="Lucas M."/>
            <person name="Rochet M."/>
            <person name="Gaillardin C."/>
            <person name="Tallada V.A."/>
            <person name="Garzon A."/>
            <person name="Thode G."/>
            <person name="Daga R.R."/>
            <person name="Cruzado L."/>
            <person name="Jimenez J."/>
            <person name="Sanchez M."/>
            <person name="del Rey F."/>
            <person name="Benito J."/>
            <person name="Dominguez A."/>
            <person name="Revuelta J.L."/>
            <person name="Moreno S."/>
            <person name="Armstrong J."/>
            <person name="Forsburg S.L."/>
            <person name="Cerutti L."/>
            <person name="Lowe T."/>
            <person name="McCombie W.R."/>
            <person name="Paulsen I."/>
            <person name="Potashkin J."/>
            <person name="Shpakovski G.V."/>
            <person name="Ussery D."/>
            <person name="Barrell B.G."/>
            <person name="Nurse P."/>
        </authorList>
    </citation>
    <scope>NUCLEOTIDE SEQUENCE [LARGE SCALE GENOMIC DNA]</scope>
    <source>
        <strain>972 / ATCC 24843</strain>
    </source>
</reference>
<reference key="3">
    <citation type="journal article" date="2000" name="Genes Cells">
        <title>Large-scale screening of intracellular protein localization in living fission yeast cells by the use of a GFP-fusion genomic DNA library.</title>
        <authorList>
            <person name="Ding D.-Q."/>
            <person name="Tomita Y."/>
            <person name="Yamamoto A."/>
            <person name="Chikashige Y."/>
            <person name="Haraguchi T."/>
            <person name="Hiraoka Y."/>
        </authorList>
    </citation>
    <scope>NUCLEOTIDE SEQUENCE [LARGE SCALE GENOMIC DNA] OF 1-143</scope>
    <source>
        <strain>ATCC 38364 / 968</strain>
    </source>
</reference>
<reference key="4">
    <citation type="journal article" date="2002" name="Mol. Microbiol.">
        <title>Diethylmaleate activates the transcription factor Pap1 by covalent modification of critical cysteine residues.</title>
        <authorList>
            <person name="Castillo E.A."/>
            <person name="Ayte J."/>
            <person name="Chiva C."/>
            <person name="Moldon A."/>
            <person name="Carrascal M."/>
            <person name="Abian J."/>
            <person name="Jones N."/>
            <person name="Hidalgo E."/>
        </authorList>
    </citation>
    <scope>PROTEIN SEQUENCE OF 514-525</scope>
    <scope>FUNCTION</scope>
    <scope>SUBCELLULAR LOCATION</scope>
</reference>
<reference key="5">
    <citation type="journal article" date="1992" name="Mol. Cell. Biol.">
        <title>Fission yeast pap1-dependent transcription is negatively regulated by an essential nuclear protein, crm1.</title>
        <authorList>
            <person name="Toda T."/>
            <person name="Shimanuki M."/>
            <person name="Saka Y."/>
            <person name="Yamano H."/>
            <person name="Adachi Y."/>
            <person name="Shirakawa M."/>
            <person name="Kyogoku Y."/>
            <person name="Yanagida M."/>
        </authorList>
    </citation>
    <scope>FUNCTION</scope>
</reference>
<reference key="6">
    <citation type="journal article" date="1998" name="Genes Dev.">
        <title>Regulation of the fission yeast transcription factor Pap1 by oxidative stress: requirement for the nuclear export factor Crm1 (Exportin) and the stress-activated MAP kinase Sty1/Spc1.</title>
        <authorList>
            <person name="Toone W.M."/>
            <person name="Kuge S."/>
            <person name="Samuels M."/>
            <person name="Morgan B.A."/>
            <person name="Toda T."/>
            <person name="Jones N."/>
        </authorList>
    </citation>
    <scope>FUNCTION</scope>
    <scope>SUBCELLULAR LOCATION</scope>
</reference>
<reference key="7">
    <citation type="journal article" date="1998" name="Genes Dev.">
        <authorList>
            <person name="Toone W.M."/>
            <person name="Kuge S."/>
            <person name="Samuels M."/>
            <person name="Morgan B.A."/>
            <person name="Toda T."/>
            <person name="Jones N."/>
        </authorList>
    </citation>
    <scope>ERRATUM OF PUBMED:9585505</scope>
</reference>
<reference key="8">
    <citation type="journal article" date="1999" name="J. Biol. Chem.">
        <title>A novel nuclear export signal sensitive to oxidative stress in the fission yeast transcription factor Pap1.</title>
        <authorList>
            <person name="Kudo N."/>
            <person name="Taoka H."/>
            <person name="Toda T."/>
            <person name="Yoshida M."/>
            <person name="Horinouchi S."/>
        </authorList>
    </citation>
    <scope>SUBCELLULAR LOCATION</scope>
    <scope>MUTAGENESIS OF PHE-517; ILE-519; LEU-522; CYS-523; LEU-526 AND CYS-532</scope>
</reference>
<reference key="9">
    <citation type="journal article" date="2004" name="Mol. Microbiol.">
        <title>Activation of the redox sensor Pap1 by hydrogen peroxide requires modulation of the intracellular oxidant concentration.</title>
        <authorList>
            <person name="Vivancos A.P."/>
            <person name="Castillo E.A."/>
            <person name="Jones N."/>
            <person name="Ayte J."/>
            <person name="Hidalgo E."/>
        </authorList>
    </citation>
    <scope>SUBCELLULAR LOCATION</scope>
    <scope>DISULFIDE BOND</scope>
    <scope>MUTAGENESIS OF CYS-278 AND CYS-501</scope>
</reference>
<reference key="10">
    <citation type="journal article" date="2005" name="J. Biol. Chem.">
        <title>Oxidation of a eukaryotic 2-Cys peroxiredoxin is a molecular switch controlling the transcriptional response to increasing levels of hydrogen peroxide.</title>
        <authorList>
            <person name="Bozonet S.M."/>
            <person name="Findlay V.J."/>
            <person name="Day A.M."/>
            <person name="Cameron J."/>
            <person name="Veal E.A."/>
            <person name="Morgan B.A."/>
        </authorList>
    </citation>
    <scope>SUBCELLULAR LOCATION</scope>
</reference>
<reference key="11">
    <citation type="journal article" date="2006" name="Nat. Biotechnol.">
        <title>ORFeome cloning and global analysis of protein localization in the fission yeast Schizosaccharomyces pombe.</title>
        <authorList>
            <person name="Matsuyama A."/>
            <person name="Arai R."/>
            <person name="Yashiroda Y."/>
            <person name="Shirai A."/>
            <person name="Kamata A."/>
            <person name="Sekido S."/>
            <person name="Kobayashi Y."/>
            <person name="Hashimoto A."/>
            <person name="Hamamoto M."/>
            <person name="Hiraoka Y."/>
            <person name="Horinouchi S."/>
            <person name="Yoshida M."/>
        </authorList>
    </citation>
    <scope>SUBCELLULAR LOCATION [LARGE SCALE ANALYSIS]</scope>
</reference>
<reference key="12">
    <citation type="journal article" date="2013" name="Cell Rep.">
        <title>Dissection of a redox relay: H2O2-dependent activation of the transcription factor Pap1 through the peroxidatic Tpx1-thioredoxin cycle.</title>
        <authorList>
            <person name="Calvo I.A."/>
            <person name="Boronat S."/>
            <person name="Domenech A."/>
            <person name="Garcia-Santamarina S."/>
            <person name="Ayte J."/>
            <person name="Hidalgo E."/>
        </authorList>
    </citation>
    <scope>INTERACTION WITH TPX1</scope>
</reference>
<reference key="13">
    <citation type="journal article" date="2013" name="J. Cell Sci.">
        <title>Reversible thiol oxidation in the H2O2-dependent activation of the transcription factor Pap1.</title>
        <authorList>
            <person name="Calvo I.A."/>
            <person name="Ayte J."/>
            <person name="Hidalgo E."/>
        </authorList>
    </citation>
    <scope>FUNCTION</scope>
    <scope>MUTAGENESIS OF CYS-259; CYS-278; CYS-285; CYS-501; CYS-523 AND CYS-532</scope>
</reference>
<reference key="14">
    <citation type="journal article" date="2000" name="Nat. Struct. Biol.">
        <title>Structural basis for the diversity of DNA recognition by bZIP transcription factors.</title>
        <authorList>
            <person name="Fujii Y."/>
            <person name="Shimizu T."/>
            <person name="Toda T."/>
            <person name="Yanagida M."/>
            <person name="Hakoshima T."/>
        </authorList>
    </citation>
    <scope>X-RAY CRYSTALLOGRAPHY (2.00 ANGSTROMS) OF 71-140</scope>
    <scope>SUBUNIT</scope>
    <scope>DNA-BINDING</scope>
</reference>